<protein>
    <recommendedName>
        <fullName evidence="1">Ribose-5-phosphate isomerase A</fullName>
        <ecNumber evidence="1">5.3.1.6</ecNumber>
    </recommendedName>
    <alternativeName>
        <fullName evidence="1">Phosphoriboisomerase A</fullName>
        <shortName evidence="1">PRI</shortName>
    </alternativeName>
</protein>
<feature type="chain" id="PRO_0000158468" description="Ribose-5-phosphate isomerase A">
    <location>
        <begin position="1"/>
        <end position="228"/>
    </location>
</feature>
<feature type="active site" description="Proton acceptor" evidence="1">
    <location>
        <position position="107"/>
    </location>
</feature>
<feature type="binding site" evidence="1">
    <location>
        <begin position="29"/>
        <end position="32"/>
    </location>
    <ligand>
        <name>substrate</name>
    </ligand>
</feature>
<feature type="binding site" evidence="1">
    <location>
        <begin position="85"/>
        <end position="88"/>
    </location>
    <ligand>
        <name>substrate</name>
    </ligand>
</feature>
<feature type="binding site" evidence="1">
    <location>
        <begin position="98"/>
        <end position="101"/>
    </location>
    <ligand>
        <name>substrate</name>
    </ligand>
</feature>
<feature type="binding site" evidence="1">
    <location>
        <position position="125"/>
    </location>
    <ligand>
        <name>substrate</name>
    </ligand>
</feature>
<name>RPIA_STAAW</name>
<reference key="1">
    <citation type="journal article" date="2002" name="Lancet">
        <title>Genome and virulence determinants of high virulence community-acquired MRSA.</title>
        <authorList>
            <person name="Baba T."/>
            <person name="Takeuchi F."/>
            <person name="Kuroda M."/>
            <person name="Yuzawa H."/>
            <person name="Aoki K."/>
            <person name="Oguchi A."/>
            <person name="Nagai Y."/>
            <person name="Iwama N."/>
            <person name="Asano K."/>
            <person name="Naimi T."/>
            <person name="Kuroda H."/>
            <person name="Cui L."/>
            <person name="Yamamoto K."/>
            <person name="Hiramatsu K."/>
        </authorList>
    </citation>
    <scope>NUCLEOTIDE SEQUENCE [LARGE SCALE GENOMIC DNA]</scope>
    <source>
        <strain>MW2</strain>
    </source>
</reference>
<gene>
    <name evidence="1" type="primary">rpiA</name>
    <name type="ordered locus">MW2256</name>
</gene>
<proteinExistence type="inferred from homology"/>
<keyword id="KW-0413">Isomerase</keyword>
<evidence type="ECO:0000255" key="1">
    <source>
        <dbReference type="HAMAP-Rule" id="MF_00170"/>
    </source>
</evidence>
<comment type="function">
    <text evidence="1">Catalyzes the reversible conversion of ribose-5-phosphate to ribulose 5-phosphate.</text>
</comment>
<comment type="catalytic activity">
    <reaction evidence="1">
        <text>aldehydo-D-ribose 5-phosphate = D-ribulose 5-phosphate</text>
        <dbReference type="Rhea" id="RHEA:14657"/>
        <dbReference type="ChEBI" id="CHEBI:58121"/>
        <dbReference type="ChEBI" id="CHEBI:58273"/>
        <dbReference type="EC" id="5.3.1.6"/>
    </reaction>
</comment>
<comment type="pathway">
    <text evidence="1">Carbohydrate degradation; pentose phosphate pathway; D-ribose 5-phosphate from D-ribulose 5-phosphate (non-oxidative stage): step 1/1.</text>
</comment>
<comment type="subunit">
    <text evidence="1">Homodimer.</text>
</comment>
<comment type="similarity">
    <text evidence="1">Belongs to the ribose 5-phosphate isomerase family.</text>
</comment>
<sequence length="228" mass="25550">MKDVKALKLMTLNDVLSQINGDMTLGIGTGSTMELLLPQMAQLIKERGYNITGVCTSNKIAFLAKELGIKICEINDVDHIDLAIDGADEVDPSLNIIKGGGGALFREKVIDEMASRFVVVVDETKIVQYLGETFKLPVEVDKFNWYHILRKIESYADIKVERRVNEDVAFITDNGNYILDCKLPKGIDPYKFHEYLIHLTGVFETGYFLDMADQVIVGTQEGVKILEK</sequence>
<accession>P66696</accession>
<accession>Q99RT7</accession>
<organism>
    <name type="scientific">Staphylococcus aureus (strain MW2)</name>
    <dbReference type="NCBI Taxonomy" id="196620"/>
    <lineage>
        <taxon>Bacteria</taxon>
        <taxon>Bacillati</taxon>
        <taxon>Bacillota</taxon>
        <taxon>Bacilli</taxon>
        <taxon>Bacillales</taxon>
        <taxon>Staphylococcaceae</taxon>
        <taxon>Staphylococcus</taxon>
    </lineage>
</organism>
<dbReference type="EC" id="5.3.1.6" evidence="1"/>
<dbReference type="EMBL" id="BA000033">
    <property type="protein sequence ID" value="BAB96121.1"/>
    <property type="molecule type" value="Genomic_DNA"/>
</dbReference>
<dbReference type="RefSeq" id="WP_000655864.1">
    <property type="nucleotide sequence ID" value="NC_003923.1"/>
</dbReference>
<dbReference type="SMR" id="P66696"/>
<dbReference type="KEGG" id="sam:MW2256"/>
<dbReference type="HOGENOM" id="CLU_056590_1_0_9"/>
<dbReference type="UniPathway" id="UPA00115">
    <property type="reaction ID" value="UER00412"/>
</dbReference>
<dbReference type="GO" id="GO:0005829">
    <property type="term" value="C:cytosol"/>
    <property type="evidence" value="ECO:0007669"/>
    <property type="project" value="TreeGrafter"/>
</dbReference>
<dbReference type="GO" id="GO:0004751">
    <property type="term" value="F:ribose-5-phosphate isomerase activity"/>
    <property type="evidence" value="ECO:0007669"/>
    <property type="project" value="UniProtKB-UniRule"/>
</dbReference>
<dbReference type="GO" id="GO:0006014">
    <property type="term" value="P:D-ribose metabolic process"/>
    <property type="evidence" value="ECO:0007669"/>
    <property type="project" value="TreeGrafter"/>
</dbReference>
<dbReference type="GO" id="GO:0009052">
    <property type="term" value="P:pentose-phosphate shunt, non-oxidative branch"/>
    <property type="evidence" value="ECO:0007669"/>
    <property type="project" value="UniProtKB-UniRule"/>
</dbReference>
<dbReference type="CDD" id="cd01398">
    <property type="entry name" value="RPI_A"/>
    <property type="match status" value="1"/>
</dbReference>
<dbReference type="FunFam" id="3.40.50.1360:FF:000001">
    <property type="entry name" value="Ribose-5-phosphate isomerase A"/>
    <property type="match status" value="1"/>
</dbReference>
<dbReference type="Gene3D" id="3.30.70.260">
    <property type="match status" value="1"/>
</dbReference>
<dbReference type="Gene3D" id="3.40.50.1360">
    <property type="match status" value="1"/>
</dbReference>
<dbReference type="HAMAP" id="MF_00170">
    <property type="entry name" value="Rib_5P_isom_A"/>
    <property type="match status" value="1"/>
</dbReference>
<dbReference type="InterPro" id="IPR037171">
    <property type="entry name" value="NagB/RpiA_transferase-like"/>
</dbReference>
<dbReference type="InterPro" id="IPR020672">
    <property type="entry name" value="Ribose5P_isomerase_typA_subgr"/>
</dbReference>
<dbReference type="InterPro" id="IPR004788">
    <property type="entry name" value="Ribose5P_isomerase_type_A"/>
</dbReference>
<dbReference type="NCBIfam" id="NF001924">
    <property type="entry name" value="PRK00702.1"/>
    <property type="match status" value="1"/>
</dbReference>
<dbReference type="NCBIfam" id="NF010585">
    <property type="entry name" value="PRK13978.1"/>
    <property type="match status" value="1"/>
</dbReference>
<dbReference type="NCBIfam" id="TIGR00021">
    <property type="entry name" value="rpiA"/>
    <property type="match status" value="1"/>
</dbReference>
<dbReference type="PANTHER" id="PTHR11934">
    <property type="entry name" value="RIBOSE-5-PHOSPHATE ISOMERASE"/>
    <property type="match status" value="1"/>
</dbReference>
<dbReference type="PANTHER" id="PTHR11934:SF0">
    <property type="entry name" value="RIBOSE-5-PHOSPHATE ISOMERASE"/>
    <property type="match status" value="1"/>
</dbReference>
<dbReference type="Pfam" id="PF06026">
    <property type="entry name" value="Rib_5-P_isom_A"/>
    <property type="match status" value="1"/>
</dbReference>
<dbReference type="SUPFAM" id="SSF75445">
    <property type="entry name" value="D-ribose-5-phosphate isomerase (RpiA), lid domain"/>
    <property type="match status" value="1"/>
</dbReference>
<dbReference type="SUPFAM" id="SSF100950">
    <property type="entry name" value="NagB/RpiA/CoA transferase-like"/>
    <property type="match status" value="1"/>
</dbReference>